<reference key="1">
    <citation type="journal article" date="2003" name="J. Biol. Chem.">
        <title>Cloning and characterization of a novel Na+-dependent glucose transporter (NaGLT1) in rat kidney.</title>
        <authorList>
            <person name="Horiba N."/>
            <person name="Masuda S."/>
            <person name="Takeuchi A."/>
            <person name="Takeuchi D."/>
            <person name="Okuda M."/>
            <person name="Inui K."/>
        </authorList>
    </citation>
    <scope>NUCLEOTIDE SEQUENCE [MRNA]</scope>
    <scope>FUNCTION</scope>
    <scope>SUBCELLULAR LOCATION</scope>
    <scope>TISSUE SPECIFICITY</scope>
    <source>
        <strain>Wistar</strain>
        <tissue>Kidney</tissue>
    </source>
</reference>
<reference key="2">
    <citation type="journal article" date="2004" name="Genome Res.">
        <title>The status, quality, and expansion of the NIH full-length cDNA project: the Mammalian Gene Collection (MGC).</title>
        <authorList>
            <consortium name="The MGC Project Team"/>
        </authorList>
    </citation>
    <scope>NUCLEOTIDE SEQUENCE [LARGE SCALE MRNA]</scope>
    <source>
        <tissue>Kidney</tissue>
    </source>
</reference>
<reference key="3">
    <citation type="journal article" date="2012" name="Nat. Commun.">
        <title>Quantitative maps of protein phosphorylation sites across 14 different rat organs and tissues.</title>
        <authorList>
            <person name="Lundby A."/>
            <person name="Secher A."/>
            <person name="Lage K."/>
            <person name="Nordsborg N.B."/>
            <person name="Dmytriyev A."/>
            <person name="Lundby C."/>
            <person name="Olsen J.V."/>
        </authorList>
    </citation>
    <scope>PHOSPHORYLATION [LARGE SCALE ANALYSIS] AT SER-6</scope>
    <scope>IDENTIFICATION BY MASS SPECTROMETRY [LARGE SCALE ANALYSIS]</scope>
</reference>
<reference key="4">
    <citation type="journal article" date="2015" name="Am. J. Physiol.">
        <title>Alternative channels for urea in the inner medulla of the rat kidney.</title>
        <authorList>
            <person name="Nawata C.M."/>
            <person name="Dantzler W.H."/>
            <person name="Pannabecker T.L."/>
        </authorList>
    </citation>
    <scope>INDUCTION</scope>
    <scope>TISSUE SPECIFICITY</scope>
    <scope>FUNCTION</scope>
</reference>
<feature type="chain" id="PRO_0000294514" description="Sodium-dependent glucose transporter 1">
    <location>
        <begin position="1"/>
        <end position="484"/>
    </location>
</feature>
<feature type="transmembrane region" description="Helical" evidence="1">
    <location>
        <begin position="40"/>
        <end position="60"/>
    </location>
</feature>
<feature type="transmembrane region" description="Helical" evidence="1">
    <location>
        <begin position="80"/>
        <end position="100"/>
    </location>
</feature>
<feature type="transmembrane region" description="Helical" evidence="1">
    <location>
        <begin position="106"/>
        <end position="126"/>
    </location>
</feature>
<feature type="transmembrane region" description="Helical" evidence="1">
    <location>
        <begin position="135"/>
        <end position="155"/>
    </location>
</feature>
<feature type="transmembrane region" description="Helical" evidence="1">
    <location>
        <begin position="168"/>
        <end position="188"/>
    </location>
</feature>
<feature type="transmembrane region" description="Helical" evidence="1">
    <location>
        <begin position="227"/>
        <end position="247"/>
    </location>
</feature>
<feature type="transmembrane region" description="Helical" evidence="1">
    <location>
        <begin position="274"/>
        <end position="294"/>
    </location>
</feature>
<feature type="transmembrane region" description="Helical" evidence="1">
    <location>
        <begin position="317"/>
        <end position="337"/>
    </location>
</feature>
<feature type="transmembrane region" description="Helical" evidence="1">
    <location>
        <begin position="340"/>
        <end position="360"/>
    </location>
</feature>
<feature type="transmembrane region" description="Helical" evidence="1">
    <location>
        <begin position="366"/>
        <end position="386"/>
    </location>
</feature>
<feature type="transmembrane region" description="Helical" evidence="1">
    <location>
        <begin position="401"/>
        <end position="421"/>
    </location>
</feature>
<feature type="transmembrane region" description="Helical" evidence="1">
    <location>
        <begin position="428"/>
        <end position="448"/>
    </location>
</feature>
<feature type="modified residue" description="Phosphoserine" evidence="7">
    <location>
        <position position="6"/>
    </location>
</feature>
<feature type="sequence conflict" description="In Ref. 2; AAH98651." evidence="5" ref="2">
    <original>F</original>
    <variation>S</variation>
    <location>
        <position position="3"/>
    </location>
</feature>
<feature type="sequence conflict" description="In Ref. 2; AAH98651." evidence="5" ref="2">
    <original>I</original>
    <variation>M</variation>
    <location>
        <position position="166"/>
    </location>
</feature>
<evidence type="ECO:0000255" key="1"/>
<evidence type="ECO:0000269" key="2">
    <source>
    </source>
</evidence>
<evidence type="ECO:0000269" key="3">
    <source>
    </source>
</evidence>
<evidence type="ECO:0000303" key="4">
    <source>
    </source>
</evidence>
<evidence type="ECO:0000305" key="5"/>
<evidence type="ECO:0000312" key="6">
    <source>
        <dbReference type="RGD" id="631438"/>
    </source>
</evidence>
<evidence type="ECO:0007744" key="7">
    <source>
    </source>
</evidence>
<keyword id="KW-1003">Cell membrane</keyword>
<keyword id="KW-0406">Ion transport</keyword>
<keyword id="KW-0472">Membrane</keyword>
<keyword id="KW-0597">Phosphoprotein</keyword>
<keyword id="KW-1185">Reference proteome</keyword>
<keyword id="KW-0915">Sodium</keyword>
<keyword id="KW-0739">Sodium transport</keyword>
<keyword id="KW-0762">Sugar transport</keyword>
<keyword id="KW-0769">Symport</keyword>
<keyword id="KW-0812">Transmembrane</keyword>
<keyword id="KW-1133">Transmembrane helix</keyword>
<keyword id="KW-0813">Transport</keyword>
<protein>
    <recommendedName>
        <fullName evidence="4">Sodium-dependent glucose transporter 1</fullName>
        <shortName>rNaGLT1</shortName>
    </recommendedName>
    <alternativeName>
        <fullName>Major facilitator superfamily domain-containing protein 4B</fullName>
    </alternativeName>
</protein>
<dbReference type="EMBL" id="AB089802">
    <property type="protein sequence ID" value="BAC57446.1"/>
    <property type="molecule type" value="mRNA"/>
</dbReference>
<dbReference type="EMBL" id="BC098651">
    <property type="protein sequence ID" value="AAH98651.1"/>
    <property type="molecule type" value="mRNA"/>
</dbReference>
<dbReference type="RefSeq" id="NP_788269.1">
    <property type="nucleotide sequence ID" value="NM_176080.2"/>
</dbReference>
<dbReference type="SMR" id="Q80T22"/>
<dbReference type="FunCoup" id="Q80T22">
    <property type="interactions" value="1"/>
</dbReference>
<dbReference type="STRING" id="10116.ENSRNOP00000054044"/>
<dbReference type="TCDB" id="2.A.1.7.4">
    <property type="family name" value="the major facilitator superfamily (mfs)"/>
</dbReference>
<dbReference type="GlyGen" id="Q80T22">
    <property type="glycosylation" value="1 site"/>
</dbReference>
<dbReference type="iPTMnet" id="Q80T22"/>
<dbReference type="PhosphoSitePlus" id="Q80T22"/>
<dbReference type="PaxDb" id="10116-ENSRNOP00000054044"/>
<dbReference type="GeneID" id="337920"/>
<dbReference type="KEGG" id="rno:337920"/>
<dbReference type="UCSC" id="RGD:631438">
    <property type="organism name" value="rat"/>
</dbReference>
<dbReference type="AGR" id="RGD:631438"/>
<dbReference type="CTD" id="337920"/>
<dbReference type="RGD" id="631438">
    <property type="gene designation" value="Naglt1"/>
</dbReference>
<dbReference type="eggNOG" id="ENOG502R5UW">
    <property type="taxonomic scope" value="Eukaryota"/>
</dbReference>
<dbReference type="InParanoid" id="Q80T22"/>
<dbReference type="OrthoDB" id="78465at9989"/>
<dbReference type="PhylomeDB" id="Q80T22"/>
<dbReference type="TreeFam" id="TF314613"/>
<dbReference type="PRO" id="PR:Q80T22"/>
<dbReference type="Proteomes" id="UP000002494">
    <property type="component" value="Unplaced"/>
</dbReference>
<dbReference type="GO" id="GO:0016324">
    <property type="term" value="C:apical plasma membrane"/>
    <property type="evidence" value="ECO:0007669"/>
    <property type="project" value="UniProtKB-SubCell"/>
</dbReference>
<dbReference type="GO" id="GO:0031526">
    <property type="term" value="C:brush border membrane"/>
    <property type="evidence" value="ECO:0000314"/>
    <property type="project" value="RGD"/>
</dbReference>
<dbReference type="GO" id="GO:0015293">
    <property type="term" value="F:symporter activity"/>
    <property type="evidence" value="ECO:0007669"/>
    <property type="project" value="UniProtKB-KW"/>
</dbReference>
<dbReference type="GO" id="GO:0098708">
    <property type="term" value="P:D-glucose import across plasma membrane"/>
    <property type="evidence" value="ECO:0000314"/>
    <property type="project" value="RGD"/>
</dbReference>
<dbReference type="GO" id="GO:0006814">
    <property type="term" value="P:sodium ion transport"/>
    <property type="evidence" value="ECO:0007669"/>
    <property type="project" value="UniProtKB-KW"/>
</dbReference>
<dbReference type="CDD" id="cd17454">
    <property type="entry name" value="MFS_NaGLT1_MFSD4B"/>
    <property type="match status" value="1"/>
</dbReference>
<dbReference type="FunFam" id="1.20.1250.20:FF:000408">
    <property type="entry name" value="Major facilitator superfamily domain containing 4B"/>
    <property type="match status" value="1"/>
</dbReference>
<dbReference type="Gene3D" id="1.20.1250.20">
    <property type="entry name" value="MFS general substrate transporter like domains"/>
    <property type="match status" value="2"/>
</dbReference>
<dbReference type="InterPro" id="IPR036259">
    <property type="entry name" value="MFS_trans_sf"/>
</dbReference>
<dbReference type="PANTHER" id="PTHR23121:SF11">
    <property type="entry name" value="MAJOR FACILITATOR SUPERFAMILY DOMAIN CONTAINING 4B5"/>
    <property type="match status" value="1"/>
</dbReference>
<dbReference type="PANTHER" id="PTHR23121">
    <property type="entry name" value="SODIUM-DEPENDENT GLUCOSE TRANSPORTER 1"/>
    <property type="match status" value="1"/>
</dbReference>
<dbReference type="SUPFAM" id="SSF103473">
    <property type="entry name" value="MFS general substrate transporter"/>
    <property type="match status" value="1"/>
</dbReference>
<accession>Q80T22</accession>
<accession>Q4KMB5</accession>
<comment type="function">
    <text evidence="2 3">May function as a sodium-dependent glucose transporter (PubMed:12590146). Potential channels for urea in the inner medulla of kidney (PubMed:26423860).</text>
</comment>
<comment type="subcellular location">
    <subcellularLocation>
        <location evidence="2">Apical cell membrane</location>
        <topology evidence="2">Multi-pass membrane protein</topology>
    </subcellularLocation>
</comment>
<comment type="tissue specificity">
    <text evidence="2 3">Expressed in brain, liver, lung, and kidney. In kidney expressed in cortex and inner medulla, in ascending thin limbs (ATLs) and lower descending thin limbs (DTLs). Primarily expressed in the proximal tubules of the kidney.</text>
</comment>
<comment type="induction">
    <text evidence="3">After water restriction, up-regulated in inner medulla ascending thin limbs (ATLs) and lower descending thin limbs.</text>
</comment>
<comment type="similarity">
    <text evidence="5">Belongs to the major facilitator superfamily.</text>
</comment>
<name>MFS4B_RAT</name>
<gene>
    <name evidence="6" type="primary">Mfsd4b</name>
    <name type="synonym">Naglt1</name>
</gene>
<organism>
    <name type="scientific">Rattus norvegicus</name>
    <name type="common">Rat</name>
    <dbReference type="NCBI Taxonomy" id="10116"/>
    <lineage>
        <taxon>Eukaryota</taxon>
        <taxon>Metazoa</taxon>
        <taxon>Chordata</taxon>
        <taxon>Craniata</taxon>
        <taxon>Vertebrata</taxon>
        <taxon>Euteleostomi</taxon>
        <taxon>Mammalia</taxon>
        <taxon>Eutheria</taxon>
        <taxon>Euarchontoglires</taxon>
        <taxon>Glires</taxon>
        <taxon>Rodentia</taxon>
        <taxon>Myomorpha</taxon>
        <taxon>Muroidea</taxon>
        <taxon>Muridae</taxon>
        <taxon>Murinae</taxon>
        <taxon>Rattus</taxon>
    </lineage>
</organism>
<proteinExistence type="evidence at protein level"/>
<sequence length="484" mass="51775">MEFRGSGATAVEQHLLQSETPGKNGLQATSSDQVGRTLRWFTTVVLNAAFLGMGVSAAVLGPTFPDLARNVNRNISSLSEIFVGRALGYLGGSVVGGVLFDCMNHFLLLGLSHLLTAAGLYLTPFCKTAALLTAMMSITGVSFGVLDTGGNVLILDLWGDKGAPHIQALHFSFALGAFLAPLLAKLAWGTTASAQNHTEPQLDRSALNRSFEAASDSVLAVPDDMNLLWAYASIGTYVLVLSVFLFAPFFKKRSKQKKSAASAQGARRAKYHRALLCLLFLFFFFYVGAEVTYGSYVFSFATTHVGMEESEAAGLNSIFWGTFAACRGLAIFFATLLQPGTMMVLCNIGSLASSFFLVLFDKSPLCLWIASSVYGASMAATFPSGISWIEQYTTLTGKSAAFILVGAALGLMATPALSGILQGHYPDLPVILYMCLGSAVLTTVLFPVMYKVATLPLDRKQEKSINSEGQKILLSSSRLIKEAK</sequence>